<feature type="chain" id="PRO_0000276497" description="Large ribosomal subunit protein bL33c">
    <location>
        <begin position="1"/>
        <end position="66"/>
    </location>
</feature>
<comment type="subcellular location">
    <subcellularLocation>
        <location>Plastid</location>
        <location>Chloroplast</location>
    </subcellularLocation>
</comment>
<comment type="similarity">
    <text evidence="1">Belongs to the bacterial ribosomal protein bL33 family.</text>
</comment>
<sequence length="66" mass="7651">MAKGKDVRVTVILECTDCVRNSVNKVSTGISRYITQKNRHNTPNRLELKKFCPYCYKHTVHGEIKK</sequence>
<proteinExistence type="inferred from homology"/>
<protein>
    <recommendedName>
        <fullName evidence="1">Large ribosomal subunit protein bL33c</fullName>
    </recommendedName>
    <alternativeName>
        <fullName evidence="2">50S ribosomal protein L33, chloroplastic</fullName>
    </alternativeName>
</protein>
<keyword id="KW-0150">Chloroplast</keyword>
<keyword id="KW-0934">Plastid</keyword>
<keyword id="KW-1185">Reference proteome</keyword>
<keyword id="KW-0687">Ribonucleoprotein</keyword>
<keyword id="KW-0689">Ribosomal protein</keyword>
<reference key="1">
    <citation type="journal article" date="2007" name="Plant Biotechnol. J.">
        <title>The complete nucleotide sequence of the coffee (Coffea arabica L.) chloroplast genome: organization and implications for biotechnology and phylogenetic relationships amongst angiosperms.</title>
        <authorList>
            <person name="Samson N."/>
            <person name="Bausher M.G."/>
            <person name="Lee S.-B."/>
            <person name="Jansen R.K."/>
            <person name="Daniell H."/>
        </authorList>
    </citation>
    <scope>NUCLEOTIDE SEQUENCE [LARGE SCALE GENOMIC DNA]</scope>
</reference>
<geneLocation type="chloroplast"/>
<organism>
    <name type="scientific">Coffea arabica</name>
    <name type="common">Arabian coffee</name>
    <dbReference type="NCBI Taxonomy" id="13443"/>
    <lineage>
        <taxon>Eukaryota</taxon>
        <taxon>Viridiplantae</taxon>
        <taxon>Streptophyta</taxon>
        <taxon>Embryophyta</taxon>
        <taxon>Tracheophyta</taxon>
        <taxon>Spermatophyta</taxon>
        <taxon>Magnoliopsida</taxon>
        <taxon>eudicotyledons</taxon>
        <taxon>Gunneridae</taxon>
        <taxon>Pentapetalae</taxon>
        <taxon>asterids</taxon>
        <taxon>lamiids</taxon>
        <taxon>Gentianales</taxon>
        <taxon>Rubiaceae</taxon>
        <taxon>Ixoroideae</taxon>
        <taxon>Gardenieae complex</taxon>
        <taxon>Bertiereae - Coffeeae clade</taxon>
        <taxon>Coffeeae</taxon>
        <taxon>Coffea</taxon>
    </lineage>
</organism>
<accession>A0A356</accession>
<name>RK33_COFAR</name>
<gene>
    <name evidence="1" type="primary">rpl33</name>
</gene>
<evidence type="ECO:0000255" key="1">
    <source>
        <dbReference type="HAMAP-Rule" id="MF_00294"/>
    </source>
</evidence>
<evidence type="ECO:0000305" key="2"/>
<dbReference type="EMBL" id="EF044213">
    <property type="protein sequence ID" value="ABJ89700.1"/>
    <property type="molecule type" value="Genomic_DNA"/>
</dbReference>
<dbReference type="RefSeq" id="YP_817503.1">
    <property type="nucleotide sequence ID" value="NC_008535.1"/>
</dbReference>
<dbReference type="GeneID" id="4421750"/>
<dbReference type="OrthoDB" id="361870at2759"/>
<dbReference type="Proteomes" id="UP000515148">
    <property type="component" value="Chloroplast Pltd"/>
</dbReference>
<dbReference type="GO" id="GO:0009507">
    <property type="term" value="C:chloroplast"/>
    <property type="evidence" value="ECO:0007669"/>
    <property type="project" value="UniProtKB-SubCell"/>
</dbReference>
<dbReference type="GO" id="GO:1990904">
    <property type="term" value="C:ribonucleoprotein complex"/>
    <property type="evidence" value="ECO:0007669"/>
    <property type="project" value="UniProtKB-KW"/>
</dbReference>
<dbReference type="GO" id="GO:0005840">
    <property type="term" value="C:ribosome"/>
    <property type="evidence" value="ECO:0007669"/>
    <property type="project" value="UniProtKB-KW"/>
</dbReference>
<dbReference type="GO" id="GO:0003735">
    <property type="term" value="F:structural constituent of ribosome"/>
    <property type="evidence" value="ECO:0007669"/>
    <property type="project" value="InterPro"/>
</dbReference>
<dbReference type="GO" id="GO:0006412">
    <property type="term" value="P:translation"/>
    <property type="evidence" value="ECO:0007669"/>
    <property type="project" value="UniProtKB-UniRule"/>
</dbReference>
<dbReference type="Gene3D" id="2.20.28.120">
    <property type="entry name" value="Ribosomal protein L33"/>
    <property type="match status" value="1"/>
</dbReference>
<dbReference type="HAMAP" id="MF_00294">
    <property type="entry name" value="Ribosomal_bL33"/>
    <property type="match status" value="1"/>
</dbReference>
<dbReference type="InterPro" id="IPR001705">
    <property type="entry name" value="Ribosomal_bL33"/>
</dbReference>
<dbReference type="InterPro" id="IPR018264">
    <property type="entry name" value="Ribosomal_bL33_CS"/>
</dbReference>
<dbReference type="InterPro" id="IPR038584">
    <property type="entry name" value="Ribosomal_bL33_sf"/>
</dbReference>
<dbReference type="InterPro" id="IPR011332">
    <property type="entry name" value="Ribosomal_zn-bd"/>
</dbReference>
<dbReference type="NCBIfam" id="NF001764">
    <property type="entry name" value="PRK00504.1"/>
    <property type="match status" value="1"/>
</dbReference>
<dbReference type="NCBIfam" id="NF001860">
    <property type="entry name" value="PRK00595.1"/>
    <property type="match status" value="1"/>
</dbReference>
<dbReference type="NCBIfam" id="TIGR01023">
    <property type="entry name" value="rpmG_bact"/>
    <property type="match status" value="1"/>
</dbReference>
<dbReference type="PANTHER" id="PTHR43168">
    <property type="entry name" value="50S RIBOSOMAL PROTEIN L33, CHLOROPLASTIC"/>
    <property type="match status" value="1"/>
</dbReference>
<dbReference type="PANTHER" id="PTHR43168:SF2">
    <property type="entry name" value="LARGE RIBOSOMAL SUBUNIT PROTEIN BL33C"/>
    <property type="match status" value="1"/>
</dbReference>
<dbReference type="Pfam" id="PF00471">
    <property type="entry name" value="Ribosomal_L33"/>
    <property type="match status" value="1"/>
</dbReference>
<dbReference type="SUPFAM" id="SSF57829">
    <property type="entry name" value="Zn-binding ribosomal proteins"/>
    <property type="match status" value="1"/>
</dbReference>
<dbReference type="PROSITE" id="PS00582">
    <property type="entry name" value="RIBOSOMAL_L33"/>
    <property type="match status" value="1"/>
</dbReference>